<comment type="similarity">
    <text evidence="1">Belongs to the UPF0434 family.</text>
</comment>
<organism>
    <name type="scientific">Escherichia coli O45:K1 (strain S88 / ExPEC)</name>
    <dbReference type="NCBI Taxonomy" id="585035"/>
    <lineage>
        <taxon>Bacteria</taxon>
        <taxon>Pseudomonadati</taxon>
        <taxon>Pseudomonadota</taxon>
        <taxon>Gammaproteobacteria</taxon>
        <taxon>Enterobacterales</taxon>
        <taxon>Enterobacteriaceae</taxon>
        <taxon>Escherichia</taxon>
    </lineage>
</organism>
<sequence>MDHRLLEIIACPVCNGKLWYNQEKQELICKLDNLAFPLRDGIPVLLETEARVLTADESKS</sequence>
<gene>
    <name evidence="1" type="primary">ycaR</name>
    <name type="ordered locus">ECS88_0945</name>
</gene>
<proteinExistence type="inferred from homology"/>
<reference key="1">
    <citation type="journal article" date="2009" name="PLoS Genet.">
        <title>Organised genome dynamics in the Escherichia coli species results in highly diverse adaptive paths.</title>
        <authorList>
            <person name="Touchon M."/>
            <person name="Hoede C."/>
            <person name="Tenaillon O."/>
            <person name="Barbe V."/>
            <person name="Baeriswyl S."/>
            <person name="Bidet P."/>
            <person name="Bingen E."/>
            <person name="Bonacorsi S."/>
            <person name="Bouchier C."/>
            <person name="Bouvet O."/>
            <person name="Calteau A."/>
            <person name="Chiapello H."/>
            <person name="Clermont O."/>
            <person name="Cruveiller S."/>
            <person name="Danchin A."/>
            <person name="Diard M."/>
            <person name="Dossat C."/>
            <person name="Karoui M.E."/>
            <person name="Frapy E."/>
            <person name="Garry L."/>
            <person name="Ghigo J.M."/>
            <person name="Gilles A.M."/>
            <person name="Johnson J."/>
            <person name="Le Bouguenec C."/>
            <person name="Lescat M."/>
            <person name="Mangenot S."/>
            <person name="Martinez-Jehanne V."/>
            <person name="Matic I."/>
            <person name="Nassif X."/>
            <person name="Oztas S."/>
            <person name="Petit M.A."/>
            <person name="Pichon C."/>
            <person name="Rouy Z."/>
            <person name="Ruf C.S."/>
            <person name="Schneider D."/>
            <person name="Tourret J."/>
            <person name="Vacherie B."/>
            <person name="Vallenet D."/>
            <person name="Medigue C."/>
            <person name="Rocha E.P.C."/>
            <person name="Denamur E."/>
        </authorList>
    </citation>
    <scope>NUCLEOTIDE SEQUENCE [LARGE SCALE GENOMIC DNA]</scope>
    <source>
        <strain>S88 / ExPEC</strain>
    </source>
</reference>
<evidence type="ECO:0000255" key="1">
    <source>
        <dbReference type="HAMAP-Rule" id="MF_01187"/>
    </source>
</evidence>
<protein>
    <recommendedName>
        <fullName evidence="1">UPF0434 protein YcaR</fullName>
    </recommendedName>
</protein>
<accession>B7MHM6</accession>
<dbReference type="EMBL" id="CU928161">
    <property type="protein sequence ID" value="CAR02277.1"/>
    <property type="molecule type" value="Genomic_DNA"/>
</dbReference>
<dbReference type="RefSeq" id="WP_000350058.1">
    <property type="nucleotide sequence ID" value="NC_011742.1"/>
</dbReference>
<dbReference type="SMR" id="B7MHM6"/>
<dbReference type="GeneID" id="93776498"/>
<dbReference type="KEGG" id="ecz:ECS88_0945"/>
<dbReference type="HOGENOM" id="CLU_155659_3_1_6"/>
<dbReference type="Proteomes" id="UP000000747">
    <property type="component" value="Chromosome"/>
</dbReference>
<dbReference type="GO" id="GO:0005829">
    <property type="term" value="C:cytosol"/>
    <property type="evidence" value="ECO:0007669"/>
    <property type="project" value="TreeGrafter"/>
</dbReference>
<dbReference type="FunFam" id="2.20.25.10:FF:000002">
    <property type="entry name" value="UPF0434 protein YcaR"/>
    <property type="match status" value="1"/>
</dbReference>
<dbReference type="Gene3D" id="2.20.25.10">
    <property type="match status" value="1"/>
</dbReference>
<dbReference type="HAMAP" id="MF_01187">
    <property type="entry name" value="UPF0434"/>
    <property type="match status" value="1"/>
</dbReference>
<dbReference type="InterPro" id="IPR005651">
    <property type="entry name" value="Trm112-like"/>
</dbReference>
<dbReference type="NCBIfam" id="NF008806">
    <property type="entry name" value="PRK11827.1"/>
    <property type="match status" value="1"/>
</dbReference>
<dbReference type="PANTHER" id="PTHR33505:SF4">
    <property type="entry name" value="PROTEIN PREY, MITOCHONDRIAL"/>
    <property type="match status" value="1"/>
</dbReference>
<dbReference type="PANTHER" id="PTHR33505">
    <property type="entry name" value="ZGC:162634"/>
    <property type="match status" value="1"/>
</dbReference>
<dbReference type="Pfam" id="PF03966">
    <property type="entry name" value="Trm112p"/>
    <property type="match status" value="1"/>
</dbReference>
<dbReference type="SUPFAM" id="SSF158997">
    <property type="entry name" value="Trm112p-like"/>
    <property type="match status" value="1"/>
</dbReference>
<feature type="chain" id="PRO_1000138302" description="UPF0434 protein YcaR">
    <location>
        <begin position="1"/>
        <end position="60"/>
    </location>
</feature>
<name>YCAR_ECO45</name>
<keyword id="KW-1185">Reference proteome</keyword>